<organism>
    <name type="scientific">Sus scrofa</name>
    <name type="common">Pig</name>
    <dbReference type="NCBI Taxonomy" id="9823"/>
    <lineage>
        <taxon>Eukaryota</taxon>
        <taxon>Metazoa</taxon>
        <taxon>Chordata</taxon>
        <taxon>Craniata</taxon>
        <taxon>Vertebrata</taxon>
        <taxon>Euteleostomi</taxon>
        <taxon>Mammalia</taxon>
        <taxon>Eutheria</taxon>
        <taxon>Laurasiatheria</taxon>
        <taxon>Artiodactyla</taxon>
        <taxon>Suina</taxon>
        <taxon>Suidae</taxon>
        <taxon>Sus</taxon>
    </lineage>
</organism>
<feature type="chain" id="PRO_0000197212" description="Metallothionein-1F">
    <location>
        <begin position="1"/>
        <end position="61"/>
    </location>
</feature>
<feature type="region of interest" description="Beta">
    <location>
        <begin position="1"/>
        <end position="29"/>
    </location>
</feature>
<feature type="region of interest" description="Alpha">
    <location>
        <begin position="30"/>
        <end position="61"/>
    </location>
</feature>
<feature type="binding site" evidence="2">
    <location>
        <position position="5"/>
    </location>
    <ligand>
        <name>a divalent metal cation</name>
        <dbReference type="ChEBI" id="CHEBI:60240"/>
        <label>1</label>
        <note>in cluster B</note>
    </ligand>
</feature>
<feature type="binding site" evidence="2">
    <location>
        <position position="7"/>
    </location>
    <ligand>
        <name>a divalent metal cation</name>
        <dbReference type="ChEBI" id="CHEBI:60240"/>
        <label>1</label>
        <note>in cluster B</note>
    </ligand>
</feature>
<feature type="binding site" evidence="2">
    <location>
        <position position="7"/>
    </location>
    <ligand>
        <name>a divalent metal cation</name>
        <dbReference type="ChEBI" id="CHEBI:60240"/>
        <label>2</label>
        <note>in cluster B</note>
    </ligand>
</feature>
<feature type="binding site" evidence="2">
    <location>
        <position position="13"/>
    </location>
    <ligand>
        <name>a divalent metal cation</name>
        <dbReference type="ChEBI" id="CHEBI:60240"/>
        <label>2</label>
        <note>in cluster B</note>
    </ligand>
</feature>
<feature type="binding site" evidence="2">
    <location>
        <position position="15"/>
    </location>
    <ligand>
        <name>a divalent metal cation</name>
        <dbReference type="ChEBI" id="CHEBI:60240"/>
        <label>2</label>
        <note>in cluster B</note>
    </ligand>
</feature>
<feature type="binding site" evidence="2">
    <location>
        <position position="15"/>
    </location>
    <ligand>
        <name>a divalent metal cation</name>
        <dbReference type="ChEBI" id="CHEBI:60240"/>
        <label>3</label>
        <note>in cluster B</note>
    </ligand>
</feature>
<feature type="binding site" evidence="2">
    <location>
        <position position="19"/>
    </location>
    <ligand>
        <name>a divalent metal cation</name>
        <dbReference type="ChEBI" id="CHEBI:60240"/>
        <label>3</label>
        <note>in cluster B</note>
    </ligand>
</feature>
<feature type="binding site" evidence="2">
    <location>
        <position position="21"/>
    </location>
    <ligand>
        <name>a divalent metal cation</name>
        <dbReference type="ChEBI" id="CHEBI:60240"/>
        <label>1</label>
        <note>in cluster B</note>
    </ligand>
</feature>
<feature type="binding site" evidence="2">
    <location>
        <position position="24"/>
    </location>
    <ligand>
        <name>a divalent metal cation</name>
        <dbReference type="ChEBI" id="CHEBI:60240"/>
        <label>1</label>
        <note>in cluster B</note>
    </ligand>
</feature>
<feature type="binding site" evidence="2">
    <location>
        <position position="24"/>
    </location>
    <ligand>
        <name>a divalent metal cation</name>
        <dbReference type="ChEBI" id="CHEBI:60240"/>
        <label>3</label>
        <note>in cluster B</note>
    </ligand>
</feature>
<feature type="binding site" evidence="2">
    <location>
        <position position="26"/>
    </location>
    <ligand>
        <name>a divalent metal cation</name>
        <dbReference type="ChEBI" id="CHEBI:60240"/>
        <label>2</label>
        <note>in cluster B</note>
    </ligand>
</feature>
<feature type="binding site" evidence="2">
    <location>
        <position position="29"/>
    </location>
    <ligand>
        <name>a divalent metal cation</name>
        <dbReference type="ChEBI" id="CHEBI:60240"/>
        <label>3</label>
        <note>in cluster B</note>
    </ligand>
</feature>
<feature type="binding site" evidence="2">
    <location>
        <position position="33"/>
    </location>
    <ligand>
        <name>a divalent metal cation</name>
        <dbReference type="ChEBI" id="CHEBI:60240"/>
        <label>4</label>
        <note>in cluster A</note>
    </ligand>
</feature>
<feature type="binding site" evidence="2">
    <location>
        <position position="34"/>
    </location>
    <ligand>
        <name>a divalent metal cation</name>
        <dbReference type="ChEBI" id="CHEBI:60240"/>
        <label>4</label>
        <note>in cluster A</note>
    </ligand>
</feature>
<feature type="binding site" evidence="2">
    <location>
        <position position="34"/>
    </location>
    <ligand>
        <name>a divalent metal cation</name>
        <dbReference type="ChEBI" id="CHEBI:60240"/>
        <label>5</label>
        <note>in cluster A</note>
    </ligand>
</feature>
<feature type="binding site" evidence="2">
    <location>
        <position position="36"/>
    </location>
    <ligand>
        <name>a divalent metal cation</name>
        <dbReference type="ChEBI" id="CHEBI:60240"/>
        <label>5</label>
        <note>in cluster A</note>
    </ligand>
</feature>
<feature type="binding site" evidence="2">
    <location>
        <position position="37"/>
    </location>
    <ligand>
        <name>a divalent metal cation</name>
        <dbReference type="ChEBI" id="CHEBI:60240"/>
        <label>5</label>
        <note>in cluster A</note>
    </ligand>
</feature>
<feature type="binding site" evidence="2">
    <location>
        <position position="37"/>
    </location>
    <ligand>
        <name>a divalent metal cation</name>
        <dbReference type="ChEBI" id="CHEBI:60240"/>
        <label>6</label>
        <note>in cluster A</note>
    </ligand>
</feature>
<feature type="binding site" evidence="2">
    <location>
        <position position="41"/>
    </location>
    <ligand>
        <name>a divalent metal cation</name>
        <dbReference type="ChEBI" id="CHEBI:60240"/>
        <label>6</label>
        <note>in cluster A</note>
    </ligand>
</feature>
<feature type="binding site" evidence="2">
    <location>
        <position position="44"/>
    </location>
    <ligand>
        <name>a divalent metal cation</name>
        <dbReference type="ChEBI" id="CHEBI:60240"/>
        <label>4</label>
        <note>in cluster A</note>
    </ligand>
</feature>
<feature type="binding site" evidence="2">
    <location>
        <position position="44"/>
    </location>
    <ligand>
        <name>a divalent metal cation</name>
        <dbReference type="ChEBI" id="CHEBI:60240"/>
        <label>6</label>
        <note>in cluster A</note>
    </ligand>
</feature>
<feature type="binding site" evidence="2">
    <location>
        <position position="48"/>
    </location>
    <ligand>
        <name>a divalent metal cation</name>
        <dbReference type="ChEBI" id="CHEBI:60240"/>
        <label>4</label>
        <note>in cluster A</note>
    </ligand>
</feature>
<feature type="binding site" evidence="2">
    <location>
        <position position="50"/>
    </location>
    <ligand>
        <name>a divalent metal cation</name>
        <dbReference type="ChEBI" id="CHEBI:60240"/>
        <label>5</label>
        <note>in cluster A</note>
    </ligand>
</feature>
<feature type="binding site" evidence="2">
    <location>
        <position position="50"/>
    </location>
    <ligand>
        <name>a divalent metal cation</name>
        <dbReference type="ChEBI" id="CHEBI:60240"/>
        <label>7</label>
        <note>in cluster A</note>
    </ligand>
</feature>
<feature type="binding site" evidence="2">
    <location>
        <position position="57"/>
    </location>
    <ligand>
        <name>a divalent metal cation</name>
        <dbReference type="ChEBI" id="CHEBI:60240"/>
        <label>7</label>
        <note>in cluster A</note>
    </ligand>
</feature>
<feature type="binding site" evidence="2">
    <location>
        <position position="59"/>
    </location>
    <ligand>
        <name>a divalent metal cation</name>
        <dbReference type="ChEBI" id="CHEBI:60240"/>
        <label>7</label>
        <note>in cluster A</note>
    </ligand>
</feature>
<feature type="binding site" evidence="2">
    <location>
        <position position="60"/>
    </location>
    <ligand>
        <name>a divalent metal cation</name>
        <dbReference type="ChEBI" id="CHEBI:60240"/>
        <label>6</label>
        <note>in cluster A</note>
    </ligand>
</feature>
<feature type="binding site" evidence="2">
    <location>
        <position position="60"/>
    </location>
    <ligand>
        <name>a divalent metal cation</name>
        <dbReference type="ChEBI" id="CHEBI:60240"/>
        <label>7</label>
        <note>in cluster A</note>
    </ligand>
</feature>
<feature type="modified residue" description="N-acetylmethionine" evidence="3">
    <location>
        <position position="1"/>
    </location>
</feature>
<feature type="modified residue" description="Phosphoserine" evidence="2">
    <location>
        <position position="58"/>
    </location>
</feature>
<reference key="1">
    <citation type="journal article" date="1998" name="Gene">
        <title>Multiple isoforms of metallothionein are expressed in the porcine liver.</title>
        <authorList>
            <person name="Huang M.-C."/>
            <person name="Pan P.K."/>
            <person name="Zheng T.F."/>
            <person name="Chen N.C."/>
            <person name="Peng J.Y."/>
            <person name="Huang P.C."/>
        </authorList>
    </citation>
    <scope>NUCLEOTIDE SEQUENCE [MRNA]</scope>
    <source>
        <tissue>Liver</tissue>
    </source>
</reference>
<sequence>MDPNCSCPTGGSCTCAGSCTCKACRCTSCKKSCCSCCPAGCAKCAQGCICKGASDKCSCCA</sequence>
<accession>P79378</accession>
<comment type="function">
    <text>Metallothioneins have a high content of cysteine residues that bind various heavy metals; these proteins are transcriptionally regulated by both heavy metals and glucocorticoids.</text>
</comment>
<comment type="subunit">
    <text evidence="1">Monomer.</text>
</comment>
<comment type="domain">
    <text>Class I metallothioneins contain 2 metal-binding domains: four divalent ions are chelated within cluster A of the alpha domain and are coordinated via cysteinyl thiolate bridges to 11 cysteine ligands. Cluster B, the corresponding region within the beta domain, can ligate three divalent ions to 9 cysteines.</text>
</comment>
<comment type="similarity">
    <text evidence="4">Belongs to the metallothionein superfamily. Type 1 family.</text>
</comment>
<proteinExistence type="inferred from homology"/>
<dbReference type="EMBL" id="AB000792">
    <property type="protein sequence ID" value="BAA19182.1"/>
    <property type="molecule type" value="mRNA"/>
</dbReference>
<dbReference type="SMR" id="P79378"/>
<dbReference type="FunCoup" id="P79378">
    <property type="interactions" value="64"/>
</dbReference>
<dbReference type="InParanoid" id="P79378"/>
<dbReference type="Proteomes" id="UP000008227">
    <property type="component" value="Unplaced"/>
</dbReference>
<dbReference type="Proteomes" id="UP000314985">
    <property type="component" value="Unplaced"/>
</dbReference>
<dbReference type="Proteomes" id="UP000694570">
    <property type="component" value="Unplaced"/>
</dbReference>
<dbReference type="Proteomes" id="UP000694571">
    <property type="component" value="Unplaced"/>
</dbReference>
<dbReference type="Proteomes" id="UP000694720">
    <property type="component" value="Unplaced"/>
</dbReference>
<dbReference type="Proteomes" id="UP000694722">
    <property type="component" value="Unplaced"/>
</dbReference>
<dbReference type="Proteomes" id="UP000694723">
    <property type="component" value="Unplaced"/>
</dbReference>
<dbReference type="Proteomes" id="UP000694724">
    <property type="component" value="Unplaced"/>
</dbReference>
<dbReference type="Proteomes" id="UP000694725">
    <property type="component" value="Unplaced"/>
</dbReference>
<dbReference type="Proteomes" id="UP000694726">
    <property type="component" value="Unplaced"/>
</dbReference>
<dbReference type="Proteomes" id="UP000694727">
    <property type="component" value="Unplaced"/>
</dbReference>
<dbReference type="Proteomes" id="UP000694728">
    <property type="component" value="Unplaced"/>
</dbReference>
<dbReference type="GO" id="GO:0005737">
    <property type="term" value="C:cytoplasm"/>
    <property type="evidence" value="ECO:0000250"/>
    <property type="project" value="UniProtKB"/>
</dbReference>
<dbReference type="GO" id="GO:0005634">
    <property type="term" value="C:nucleus"/>
    <property type="evidence" value="ECO:0000250"/>
    <property type="project" value="UniProtKB"/>
</dbReference>
<dbReference type="GO" id="GO:0046872">
    <property type="term" value="F:metal ion binding"/>
    <property type="evidence" value="ECO:0000318"/>
    <property type="project" value="GO_Central"/>
</dbReference>
<dbReference type="GO" id="GO:0008270">
    <property type="term" value="F:zinc ion binding"/>
    <property type="evidence" value="ECO:0000250"/>
    <property type="project" value="UniProtKB"/>
</dbReference>
<dbReference type="GO" id="GO:0071276">
    <property type="term" value="P:cellular response to cadmium ion"/>
    <property type="evidence" value="ECO:0000318"/>
    <property type="project" value="GO_Central"/>
</dbReference>
<dbReference type="GO" id="GO:0071280">
    <property type="term" value="P:cellular response to copper ion"/>
    <property type="evidence" value="ECO:0000318"/>
    <property type="project" value="GO_Central"/>
</dbReference>
<dbReference type="GO" id="GO:0071294">
    <property type="term" value="P:cellular response to zinc ion"/>
    <property type="evidence" value="ECO:0000250"/>
    <property type="project" value="UniProtKB"/>
</dbReference>
<dbReference type="GO" id="GO:0010273">
    <property type="term" value="P:detoxification of copper ion"/>
    <property type="evidence" value="ECO:0000318"/>
    <property type="project" value="GO_Central"/>
</dbReference>
<dbReference type="GO" id="GO:0006882">
    <property type="term" value="P:intracellular zinc ion homeostasis"/>
    <property type="evidence" value="ECO:0000318"/>
    <property type="project" value="GO_Central"/>
</dbReference>
<dbReference type="GO" id="GO:0045926">
    <property type="term" value="P:negative regulation of growth"/>
    <property type="evidence" value="ECO:0000250"/>
    <property type="project" value="UniProtKB"/>
</dbReference>
<dbReference type="FunFam" id="4.10.10.10:FF:000001">
    <property type="entry name" value="Metallothionein"/>
    <property type="match status" value="1"/>
</dbReference>
<dbReference type="Gene3D" id="4.10.10.10">
    <property type="entry name" value="Metallothionein Isoform II"/>
    <property type="match status" value="1"/>
</dbReference>
<dbReference type="InterPro" id="IPR017854">
    <property type="entry name" value="Metalthion_dom_sf"/>
</dbReference>
<dbReference type="InterPro" id="IPR023587">
    <property type="entry name" value="Metalthion_dom_sf_vert"/>
</dbReference>
<dbReference type="InterPro" id="IPR000006">
    <property type="entry name" value="Metalthion_vert"/>
</dbReference>
<dbReference type="InterPro" id="IPR018064">
    <property type="entry name" value="Metalthion_vert_metal_BS"/>
</dbReference>
<dbReference type="PANTHER" id="PTHR23299">
    <property type="entry name" value="METALLOTHIONEIN"/>
    <property type="match status" value="1"/>
</dbReference>
<dbReference type="PANTHER" id="PTHR23299:SF22">
    <property type="entry name" value="METALLOTHIONEIN-1G"/>
    <property type="match status" value="1"/>
</dbReference>
<dbReference type="Pfam" id="PF00131">
    <property type="entry name" value="Metallothio"/>
    <property type="match status" value="1"/>
</dbReference>
<dbReference type="PRINTS" id="PR00860">
    <property type="entry name" value="MTVERTEBRATE"/>
</dbReference>
<dbReference type="SUPFAM" id="SSF57868">
    <property type="entry name" value="Metallothionein"/>
    <property type="match status" value="1"/>
</dbReference>
<dbReference type="PROSITE" id="PS00203">
    <property type="entry name" value="METALLOTHIONEIN_VRT"/>
    <property type="match status" value="1"/>
</dbReference>
<evidence type="ECO:0000250" key="1"/>
<evidence type="ECO:0000250" key="2">
    <source>
        <dbReference type="UniProtKB" id="P02795"/>
    </source>
</evidence>
<evidence type="ECO:0000250" key="3">
    <source>
        <dbReference type="UniProtKB" id="P04733"/>
    </source>
</evidence>
<evidence type="ECO:0000305" key="4"/>
<keyword id="KW-0007">Acetylation</keyword>
<keyword id="KW-0479">Metal-binding</keyword>
<keyword id="KW-0480">Metal-thiolate cluster</keyword>
<keyword id="KW-0597">Phosphoprotein</keyword>
<keyword id="KW-1185">Reference proteome</keyword>
<name>MT1F_PIG</name>
<protein>
    <recommendedName>
        <fullName>Metallothionein-1F</fullName>
        <shortName>MT-1F</shortName>
    </recommendedName>
    <alternativeName>
        <fullName>Metallothionein-IF</fullName>
        <shortName>MT-IF</shortName>
    </alternativeName>
</protein>
<gene>
    <name type="primary">MT1F</name>
</gene>